<keyword id="KW-0025">Alternative splicing</keyword>
<keyword id="KW-1003">Cell membrane</keyword>
<keyword id="KW-1015">Disulfide bond</keyword>
<keyword id="KW-0325">Glycoprotein</keyword>
<keyword id="KW-0407">Ion channel</keyword>
<keyword id="KW-0406">Ion transport</keyword>
<keyword id="KW-1071">Ligand-gated ion channel</keyword>
<keyword id="KW-0472">Membrane</keyword>
<keyword id="KW-0628">Postsynaptic cell membrane</keyword>
<keyword id="KW-0675">Receptor</keyword>
<keyword id="KW-1185">Reference proteome</keyword>
<keyword id="KW-0732">Signal</keyword>
<keyword id="KW-0770">Synapse</keyword>
<keyword id="KW-0812">Transmembrane</keyword>
<keyword id="KW-1133">Transmembrane helix</keyword>
<keyword id="KW-0813">Transport</keyword>
<dbReference type="EMBL" id="AF006461">
    <property type="protein sequence ID" value="AAC06136.1"/>
    <property type="molecule type" value="mRNA"/>
</dbReference>
<dbReference type="EMBL" id="AF006462">
    <property type="protein sequence ID" value="AAC06137.1"/>
    <property type="molecule type" value="mRNA"/>
</dbReference>
<dbReference type="RefSeq" id="NP_001166178.1">
    <molecule id="O70212-1"/>
    <property type="nucleotide sequence ID" value="NM_001172707.1"/>
</dbReference>
<dbReference type="SMR" id="O70212"/>
<dbReference type="FunCoup" id="O70212">
    <property type="interactions" value="175"/>
</dbReference>
<dbReference type="STRING" id="10141.ENSCPOP00000009728"/>
<dbReference type="BindingDB" id="O70212"/>
<dbReference type="ChEMBL" id="CHEMBL3666"/>
<dbReference type="DrugCentral" id="O70212"/>
<dbReference type="GlyCosmos" id="O70212">
    <property type="glycosylation" value="4 sites, No reported glycans"/>
</dbReference>
<dbReference type="iPTMnet" id="O70212"/>
<dbReference type="GeneID" id="100135547"/>
<dbReference type="KEGG" id="cpoc:100135547"/>
<dbReference type="CTD" id="3359"/>
<dbReference type="eggNOG" id="KOG3645">
    <property type="taxonomic scope" value="Eukaryota"/>
</dbReference>
<dbReference type="InParanoid" id="O70212"/>
<dbReference type="OrthoDB" id="410315at2759"/>
<dbReference type="Proteomes" id="UP000005447">
    <property type="component" value="Unassembled WGS sequence"/>
</dbReference>
<dbReference type="GO" id="GO:0045211">
    <property type="term" value="C:postsynaptic membrane"/>
    <property type="evidence" value="ECO:0007669"/>
    <property type="project" value="UniProtKB-SubCell"/>
</dbReference>
<dbReference type="GO" id="GO:0030672">
    <property type="term" value="C:synaptic vesicle membrane"/>
    <property type="evidence" value="ECO:0000314"/>
    <property type="project" value="UniProtKB"/>
</dbReference>
<dbReference type="GO" id="GO:0005230">
    <property type="term" value="F:extracellular ligand-gated monoatomic ion channel activity"/>
    <property type="evidence" value="ECO:0007669"/>
    <property type="project" value="InterPro"/>
</dbReference>
<dbReference type="GO" id="GO:0004890">
    <property type="term" value="F:GABA-A receptor activity"/>
    <property type="evidence" value="ECO:0000314"/>
    <property type="project" value="UniProtKB"/>
</dbReference>
<dbReference type="GO" id="GO:0006812">
    <property type="term" value="P:monoatomic cation transport"/>
    <property type="evidence" value="ECO:0000314"/>
    <property type="project" value="UniProtKB"/>
</dbReference>
<dbReference type="CDD" id="cd19011">
    <property type="entry name" value="LGIC_ECD_5-HT3A"/>
    <property type="match status" value="1"/>
</dbReference>
<dbReference type="CDD" id="cd19063">
    <property type="entry name" value="LGIC_TM_5-HT3"/>
    <property type="match status" value="1"/>
</dbReference>
<dbReference type="FunFam" id="1.20.58.390:FF:000020">
    <property type="entry name" value="5-hydroxytryptamine (serotonin) receptor 3A"/>
    <property type="match status" value="1"/>
</dbReference>
<dbReference type="FunFam" id="2.70.170.10:FF:000017">
    <property type="entry name" value="5-hydroxytryptamine receptor 3A"/>
    <property type="match status" value="1"/>
</dbReference>
<dbReference type="Gene3D" id="2.70.170.10">
    <property type="entry name" value="Neurotransmitter-gated ion-channel ligand-binding domain"/>
    <property type="match status" value="1"/>
</dbReference>
<dbReference type="Gene3D" id="1.20.58.390">
    <property type="entry name" value="Neurotransmitter-gated ion-channel transmembrane domain"/>
    <property type="match status" value="1"/>
</dbReference>
<dbReference type="InterPro" id="IPR008132">
    <property type="entry name" value="5HT3_rcpt"/>
</dbReference>
<dbReference type="InterPro" id="IPR008133">
    <property type="entry name" value="5HT3_rcpt_A"/>
</dbReference>
<dbReference type="InterPro" id="IPR049944">
    <property type="entry name" value="LGIC_TM_5-HT3"/>
</dbReference>
<dbReference type="InterPro" id="IPR006202">
    <property type="entry name" value="Neur_chan_lig-bd"/>
</dbReference>
<dbReference type="InterPro" id="IPR036734">
    <property type="entry name" value="Neur_chan_lig-bd_sf"/>
</dbReference>
<dbReference type="InterPro" id="IPR006201">
    <property type="entry name" value="Neur_channel"/>
</dbReference>
<dbReference type="InterPro" id="IPR036719">
    <property type="entry name" value="Neuro-gated_channel_TM_sf"/>
</dbReference>
<dbReference type="InterPro" id="IPR038050">
    <property type="entry name" value="Neuro_actylchol_rec"/>
</dbReference>
<dbReference type="InterPro" id="IPR006029">
    <property type="entry name" value="Neurotrans-gated_channel_TM"/>
</dbReference>
<dbReference type="InterPro" id="IPR018000">
    <property type="entry name" value="Neurotransmitter_ion_chnl_CS"/>
</dbReference>
<dbReference type="NCBIfam" id="TIGR00860">
    <property type="entry name" value="LIC"/>
    <property type="match status" value="1"/>
</dbReference>
<dbReference type="PANTHER" id="PTHR18945">
    <property type="entry name" value="NEUROTRANSMITTER GATED ION CHANNEL"/>
    <property type="match status" value="1"/>
</dbReference>
<dbReference type="Pfam" id="PF02931">
    <property type="entry name" value="Neur_chan_LBD"/>
    <property type="match status" value="1"/>
</dbReference>
<dbReference type="Pfam" id="PF02932">
    <property type="entry name" value="Neur_chan_memb"/>
    <property type="match status" value="1"/>
</dbReference>
<dbReference type="PRINTS" id="PR01709">
    <property type="entry name" value="5HT3ARECEPTR"/>
</dbReference>
<dbReference type="PRINTS" id="PR01708">
    <property type="entry name" value="5HT3RECEPTOR"/>
</dbReference>
<dbReference type="PRINTS" id="PR00252">
    <property type="entry name" value="NRIONCHANNEL"/>
</dbReference>
<dbReference type="SUPFAM" id="SSF90112">
    <property type="entry name" value="Neurotransmitter-gated ion-channel transmembrane pore"/>
    <property type="match status" value="1"/>
</dbReference>
<dbReference type="SUPFAM" id="SSF63712">
    <property type="entry name" value="Nicotinic receptor ligand binding domain-like"/>
    <property type="match status" value="1"/>
</dbReference>
<dbReference type="PROSITE" id="PS00236">
    <property type="entry name" value="NEUROTR_ION_CHANNEL"/>
    <property type="match status" value="1"/>
</dbReference>
<evidence type="ECO:0000250" key="1">
    <source>
        <dbReference type="UniProtKB" id="P23979"/>
    </source>
</evidence>
<evidence type="ECO:0000250" key="2">
    <source>
        <dbReference type="UniProtKB" id="P46098"/>
    </source>
</evidence>
<evidence type="ECO:0000255" key="3"/>
<evidence type="ECO:0000256" key="4">
    <source>
        <dbReference type="SAM" id="MobiDB-lite"/>
    </source>
</evidence>
<evidence type="ECO:0000269" key="5">
    <source>
    </source>
</evidence>
<evidence type="ECO:0000303" key="6">
    <source>
    </source>
</evidence>
<evidence type="ECO:0000305" key="7"/>
<evidence type="ECO:0000305" key="8">
    <source>
    </source>
</evidence>
<evidence type="ECO:0000312" key="9">
    <source>
        <dbReference type="EMBL" id="AAC06136.1"/>
    </source>
</evidence>
<comment type="function">
    <text evidence="5">Forms serotonin (5-hydroxytryptamine/5-HT3)-activated cation-selective channel complexes, which when activated cause fast, depolarizing responses in neurons.</text>
</comment>
<comment type="catalytic activity">
    <reaction evidence="2">
        <text>Na(+)(in) = Na(+)(out)</text>
        <dbReference type="Rhea" id="RHEA:34963"/>
        <dbReference type="ChEBI" id="CHEBI:29101"/>
    </reaction>
</comment>
<comment type="catalytic activity">
    <reaction evidence="2">
        <text>K(+)(in) = K(+)(out)</text>
        <dbReference type="Rhea" id="RHEA:29463"/>
        <dbReference type="ChEBI" id="CHEBI:29103"/>
    </reaction>
</comment>
<comment type="catalytic activity">
    <reaction evidence="2">
        <text>Ca(2+)(in) = Ca(2+)(out)</text>
        <dbReference type="Rhea" id="RHEA:29671"/>
        <dbReference type="ChEBI" id="CHEBI:29108"/>
    </reaction>
</comment>
<comment type="catalytic activity">
    <reaction evidence="2">
        <text>Mg(2+)(in) = Mg(2+)(out)</text>
        <dbReference type="Rhea" id="RHEA:29827"/>
        <dbReference type="ChEBI" id="CHEBI:18420"/>
    </reaction>
</comment>
<comment type="subunit">
    <text evidence="2">Forms homopentameric as well as heteropentameric serotonin-activated cation-selective channel complexes with HTR3B or HTR3C or HTR3D or HTR3E. The homomeric complex is functional but exhibits low conductance with modified voltage dependence, and decreased agonist and antagonist affinity. Heteropentameric complexes display properties which resemble that of neuronal serotonin-activated channels in vivo. Interacts with RIC3.</text>
</comment>
<comment type="subcellular location">
    <subcellularLocation>
        <location evidence="2">Postsynaptic cell membrane</location>
        <topology evidence="1">Multi-pass membrane protein</topology>
    </subcellularLocation>
    <subcellularLocation>
        <location evidence="2">Cell membrane</location>
        <topology evidence="1">Multi-pass membrane protein</topology>
    </subcellularLocation>
</comment>
<comment type="alternative products">
    <event type="alternative splicing"/>
    <isoform>
        <id>O70212-1</id>
        <name>1</name>
        <name>5-HT3R-L</name>
        <sequence type="displayed"/>
    </isoform>
    <isoform>
        <id>O70212-2</id>
        <name>2</name>
        <name>5-HT3R-S</name>
        <sequence type="described" ref="VSP_000077"/>
    </isoform>
</comment>
<comment type="tissue specificity">
    <text evidence="5">Expressed in cortex, intestine and liver. Not expressed in muscle or spleen.</text>
</comment>
<comment type="domain">
    <text evidence="2">The HA-stretch region of HTR3A seems to be responsible for the low conductance of HTR3A homomers compared to that of HTR3A/HTR3B heteromers.</text>
</comment>
<comment type="similarity">
    <text evidence="7">Belongs to the ligand-gated ion channel (TC 1.A.9) family. 5-hydroxytryptamine receptor (TC 1.A.9.2) subfamily. HTR3A sub-subfamily.</text>
</comment>
<gene>
    <name evidence="2" type="primary">HTR3A</name>
    <name type="synonym">5HT3R</name>
    <name type="synonym">HTR3</name>
</gene>
<sequence>MVLWLQLALLALLLPTSLAQGEVRGKGTAQAHNSTRPALQRLSDHLLADYRKSVRPVRDWRKPTTVSIDAIVYAILSVDEKNQVLTTYIWYRQFWTDEFLQWNPEDFDNITKLSIPTDSIWVPDILINEFVDVGKSPNIPYVYVRHQGEVQNYKPLQVVTACSLDIYNFPFDVQNCSLTFTSWLHTIQDINISLWRLPEKVKSDKSVFMNQGEWELLGVLTEFLEFSDRESRGSFAEMKFYVVIRRRPLFYAVTLLLPSIFLMIVDIVGFYLPPDSGERVSFKITLLLGYSVFLIIVSDTLPATAIGTPLISVYFVVCMALLVISLAETILIVRLVHKQDLQQPVPLWLRHLVLERIAGLLCLGEQLTSHRGPATLQATKTDDFSGSTLLPAMGNHCGPLGGPQDLEKTSRGRGSPPPPPREASLAMCGLLQELASIRHFLEKREETREVARDWLRVGSVLDKLLFRVYLLAVLAYSITLVTLWSVWHYA</sequence>
<name>5HT3A_CAVPO</name>
<accession>O70212</accession>
<accession>O70213</accession>
<reference evidence="7" key="1">
    <citation type="journal article" date="1998" name="Mol. Pharmacol.">
        <title>Molecular cloning, functional expression, and pharmacological characterization of 5-hydroxytryptamine3 receptor cDNA and its splice variants from guinea pig.</title>
        <authorList>
            <person name="Lankiewicz S."/>
            <person name="Lobitz N."/>
            <person name="Wetzel C.H.R."/>
            <person name="Rupprecht R."/>
            <person name="Gisselmann G."/>
            <person name="Hatt H."/>
        </authorList>
    </citation>
    <scope>NUCLEOTIDE SEQUENCE [MRNA] (ISOFORMS 1 AND 2)</scope>
    <scope>FUNCTION</scope>
    <scope>TISSUE SPECIFICITY</scope>
    <source>
        <tissue>Small intestine</tissue>
    </source>
</reference>
<protein>
    <recommendedName>
        <fullName evidence="8">5-hydroxytryptamine receptor 3A</fullName>
        <shortName>5-HT3-A</shortName>
        <shortName>5-HT3A</shortName>
    </recommendedName>
    <alternativeName>
        <fullName>5-hydroxytryptamine receptor 3</fullName>
        <shortName>5-HT-3</shortName>
        <shortName>5-HT3R</shortName>
    </alternativeName>
    <alternativeName>
        <fullName>Serotonin receptor 3A</fullName>
    </alternativeName>
    <alternativeName>
        <fullName>Serotonin-gated ion channel receptor</fullName>
    </alternativeName>
</protein>
<feature type="signal peptide" evidence="3">
    <location>
        <begin position="1"/>
        <end position="19"/>
    </location>
</feature>
<feature type="chain" id="PRO_0000000407" description="5-hydroxytryptamine receptor 3A">
    <location>
        <begin position="20"/>
        <end position="490"/>
    </location>
</feature>
<feature type="topological domain" description="Extracellular" evidence="1">
    <location>
        <begin position="20"/>
        <end position="249"/>
    </location>
</feature>
<feature type="transmembrane region" description="Helical; Name=1" evidence="3">
    <location>
        <begin position="250"/>
        <end position="270"/>
    </location>
</feature>
<feature type="topological domain" description="Cytoplasmic" evidence="1">
    <location>
        <begin position="271"/>
        <end position="285"/>
    </location>
</feature>
<feature type="transmembrane region" description="Helical; Name=2" evidence="3">
    <location>
        <begin position="286"/>
        <end position="306"/>
    </location>
</feature>
<feature type="topological domain" description="Extracellular" evidence="1">
    <location>
        <begin position="307"/>
        <end position="312"/>
    </location>
</feature>
<feature type="transmembrane region" description="Helical; Name=3" evidence="3">
    <location>
        <begin position="313"/>
        <end position="333"/>
    </location>
</feature>
<feature type="topological domain" description="Cytoplasmic" evidence="1">
    <location>
        <begin position="334"/>
        <end position="467"/>
    </location>
</feature>
<feature type="transmembrane region" description="Helical; Name=4" evidence="3">
    <location>
        <begin position="468"/>
        <end position="488"/>
    </location>
</feature>
<feature type="topological domain" description="Extracellular" evidence="1">
    <location>
        <begin position="489"/>
        <end position="490"/>
    </location>
</feature>
<feature type="region of interest" description="Disordered" evidence="4">
    <location>
        <begin position="401"/>
        <end position="422"/>
    </location>
</feature>
<feature type="region of interest" description="HA-stretch; determines single-channel conductance in 5-HT3 receptors" evidence="2">
    <location>
        <begin position="426"/>
        <end position="462"/>
    </location>
</feature>
<feature type="glycosylation site" description="N-linked (GlcNAc...) asparagine" evidence="3">
    <location>
        <position position="33"/>
    </location>
</feature>
<feature type="glycosylation site" description="N-linked (GlcNAc...) asparagine" evidence="3">
    <location>
        <position position="109"/>
    </location>
</feature>
<feature type="glycosylation site" description="N-linked (GlcNAc...) asparagine" evidence="3">
    <location>
        <position position="175"/>
    </location>
</feature>
<feature type="glycosylation site" description="N-linked (GlcNAc...) asparagine" evidence="3">
    <location>
        <position position="191"/>
    </location>
</feature>
<feature type="disulfide bond" evidence="1">
    <location>
        <begin position="162"/>
        <end position="176"/>
    </location>
</feature>
<feature type="splice variant" id="VSP_000077" description="In isoform 2." evidence="6">
    <location>
        <begin position="386"/>
        <end position="391"/>
    </location>
</feature>
<organism evidence="9">
    <name type="scientific">Cavia porcellus</name>
    <name type="common">Guinea pig</name>
    <dbReference type="NCBI Taxonomy" id="10141"/>
    <lineage>
        <taxon>Eukaryota</taxon>
        <taxon>Metazoa</taxon>
        <taxon>Chordata</taxon>
        <taxon>Craniata</taxon>
        <taxon>Vertebrata</taxon>
        <taxon>Euteleostomi</taxon>
        <taxon>Mammalia</taxon>
        <taxon>Eutheria</taxon>
        <taxon>Euarchontoglires</taxon>
        <taxon>Glires</taxon>
        <taxon>Rodentia</taxon>
        <taxon>Hystricomorpha</taxon>
        <taxon>Caviidae</taxon>
        <taxon>Cavia</taxon>
    </lineage>
</organism>
<proteinExistence type="evidence at transcript level"/>